<evidence type="ECO:0000255" key="1"/>
<evidence type="ECO:0000269" key="2">
    <source>
    </source>
</evidence>
<evidence type="ECO:0000269" key="3">
    <source>
    </source>
</evidence>
<evidence type="ECO:0000305" key="4"/>
<evidence type="ECO:0007829" key="5">
    <source>
        <dbReference type="PDB" id="3TND"/>
    </source>
</evidence>
<evidence type="ECO:0007829" key="6">
    <source>
        <dbReference type="PDB" id="5ECD"/>
    </source>
</evidence>
<geneLocation type="plasmid">
    <name>pCP301</name>
</geneLocation>
<geneLocation type="plasmid">
    <name>pMYSH6000</name>
</geneLocation>
<geneLocation type="plasmid">
    <name>pWR100</name>
</geneLocation>
<sequence>MLKFMLDTNICIFTIKNKPASVRERFNLNQGKMCISSVTLMELIYGAEKSQMPERNLAVIEGFVSRIDVLDYDAAAATHTGQIRAELARQGRPVGPFDQMIAGHARSRGLIIVTNNTREFERVGGLRTEDWS</sequence>
<protein>
    <recommendedName>
        <fullName>tRNA(fMet)-specific endonuclease VapC</fullName>
        <ecNumber>3.1.-.-</ecNumber>
    </recommendedName>
    <alternativeName>
        <fullName>RNase VapC</fullName>
    </alternativeName>
    <alternativeName>
        <fullName>Toxin VapC</fullName>
    </alternativeName>
</protein>
<name>VAPC_SHIFL</name>
<organism>
    <name type="scientific">Shigella flexneri</name>
    <dbReference type="NCBI Taxonomy" id="623"/>
    <lineage>
        <taxon>Bacteria</taxon>
        <taxon>Pseudomonadati</taxon>
        <taxon>Pseudomonadota</taxon>
        <taxon>Gammaproteobacteria</taxon>
        <taxon>Enterobacterales</taxon>
        <taxon>Enterobacteriaceae</taxon>
        <taxon>Shigella</taxon>
    </lineage>
</organism>
<gene>
    <name type="primary">vapC</name>
    <name type="synonym">mvpA</name>
    <name type="synonym">stborf2</name>
    <name type="ordered locus">CP0245</name>
</gene>
<feature type="chain" id="PRO_0000410981" description="tRNA(fMet)-specific endonuclease VapC">
    <location>
        <begin position="1"/>
        <end position="132"/>
    </location>
</feature>
<feature type="domain" description="PINc">
    <location>
        <begin position="5"/>
        <end position="131"/>
    </location>
</feature>
<feature type="binding site" evidence="1">
    <location>
        <position position="7"/>
    </location>
    <ligand>
        <name>Mg(2+)</name>
        <dbReference type="ChEBI" id="CHEBI:18420"/>
    </ligand>
</feature>
<feature type="binding site" evidence="1">
    <location>
        <position position="98"/>
    </location>
    <ligand>
        <name>Mg(2+)</name>
        <dbReference type="ChEBI" id="CHEBI:18420"/>
    </ligand>
</feature>
<feature type="strand" evidence="6">
    <location>
        <begin position="4"/>
        <end position="6"/>
    </location>
</feature>
<feature type="helix" evidence="6">
    <location>
        <begin position="8"/>
        <end position="16"/>
    </location>
</feature>
<feature type="helix" evidence="6">
    <location>
        <begin position="20"/>
        <end position="28"/>
    </location>
</feature>
<feature type="turn" evidence="6">
    <location>
        <begin position="29"/>
        <end position="31"/>
    </location>
</feature>
<feature type="strand" evidence="6">
    <location>
        <begin position="32"/>
        <end position="36"/>
    </location>
</feature>
<feature type="helix" evidence="6">
    <location>
        <begin position="37"/>
        <end position="49"/>
    </location>
</feature>
<feature type="helix" evidence="6">
    <location>
        <begin position="53"/>
        <end position="64"/>
    </location>
</feature>
<feature type="strand" evidence="6">
    <location>
        <begin position="67"/>
        <end position="70"/>
    </location>
</feature>
<feature type="helix" evidence="6">
    <location>
        <begin position="74"/>
        <end position="90"/>
    </location>
</feature>
<feature type="helix" evidence="6">
    <location>
        <begin position="96"/>
        <end position="107"/>
    </location>
</feature>
<feature type="strand" evidence="6">
    <location>
        <begin position="111"/>
        <end position="113"/>
    </location>
</feature>
<feature type="helix" evidence="6">
    <location>
        <begin position="117"/>
        <end position="120"/>
    </location>
</feature>
<feature type="strand" evidence="5">
    <location>
        <begin position="128"/>
        <end position="130"/>
    </location>
</feature>
<accession>O06662</accession>
<accession>Q7BCI3</accession>
<keyword id="KW-0002">3D-structure</keyword>
<keyword id="KW-0255">Endonuclease</keyword>
<keyword id="KW-0378">Hydrolase</keyword>
<keyword id="KW-0460">Magnesium</keyword>
<keyword id="KW-0479">Metal-binding</keyword>
<keyword id="KW-0540">Nuclease</keyword>
<keyword id="KW-0614">Plasmid</keyword>
<keyword id="KW-1185">Reference proteome</keyword>
<keyword id="KW-1277">Toxin-antitoxin system</keyword>
<reference key="1">
    <citation type="journal article" date="1997" name="J. Bacteriol.">
        <title>Plasmid maintenance functions of the large virulence plasmid of Shigella flexneri.</title>
        <authorList>
            <person name="Radnedge L."/>
            <person name="Davis M.A."/>
            <person name="Youngren B."/>
            <person name="Austin S.J."/>
        </authorList>
    </citation>
    <scope>NUCLEOTIDE SEQUENCE [GENOMIC DNA]</scope>
    <source>
        <strain>YSH6000 / Serotype 2a</strain>
        <plasmid>pMYSH6000</plasmid>
    </source>
</reference>
<reference key="2">
    <citation type="journal article" date="2000" name="Mol. Microbiol.">
        <title>The virulence plasmid pWR100 and the repertoire of proteins secreted by the type III secretion apparatus of Shigella flexneri.</title>
        <authorList>
            <person name="Buchrieser C."/>
            <person name="Glaser P."/>
            <person name="Rusniok C."/>
            <person name="Nedjari H."/>
            <person name="d'Hauteville H."/>
            <person name="Kunst F."/>
            <person name="Sansonetti P.J."/>
            <person name="Parsot C."/>
        </authorList>
    </citation>
    <scope>NUCLEOTIDE SEQUENCE [GENOMIC DNA]</scope>
    <source>
        <strain>M90T / Serotype 5a</strain>
        <plasmid>pWR100</plasmid>
    </source>
</reference>
<reference key="3">
    <citation type="journal article" date="2002" name="Nucleic Acids Res.">
        <title>Genome sequence of Shigella flexneri 2a: insights into pathogenicity through comparison with genomes of Escherichia coli K12 and O157.</title>
        <authorList>
            <person name="Jin Q."/>
            <person name="Yuan Z."/>
            <person name="Xu J."/>
            <person name="Wang Y."/>
            <person name="Shen Y."/>
            <person name="Lu W."/>
            <person name="Wang J."/>
            <person name="Liu H."/>
            <person name="Yang J."/>
            <person name="Yang F."/>
            <person name="Zhang X."/>
            <person name="Zhang J."/>
            <person name="Yang G."/>
            <person name="Wu H."/>
            <person name="Qu D."/>
            <person name="Dong J."/>
            <person name="Sun L."/>
            <person name="Xue Y."/>
            <person name="Zhao A."/>
            <person name="Gao Y."/>
            <person name="Zhu J."/>
            <person name="Kan B."/>
            <person name="Ding K."/>
            <person name="Chen S."/>
            <person name="Cheng H."/>
            <person name="Yao Z."/>
            <person name="He B."/>
            <person name="Chen R."/>
            <person name="Ma D."/>
            <person name="Qiang B."/>
            <person name="Wen Y."/>
            <person name="Hou Y."/>
            <person name="Yu J."/>
        </authorList>
    </citation>
    <scope>NUCLEOTIDE SEQUENCE [LARGE SCALE GENOMIC DNA]</scope>
    <source>
        <strain>301 / Serotype 2a</strain>
        <plasmid>pCP301</plasmid>
    </source>
</reference>
<reference key="4">
    <citation type="journal article" date="2009" name="Mol. Microbiol.">
        <title>Ectopic production of VapCs from Enterobacteria inhibits translation and trans-activates YoeB mRNA interferase.</title>
        <authorList>
            <person name="Winther K.S."/>
            <person name="Gerdes K."/>
        </authorList>
    </citation>
    <scope>FUNCTION AS A TOXIN</scope>
    <scope>EXPRESSION IN E.COLI</scope>
    <source>
        <strain>YSH6000 / Serotype 2a</strain>
        <plasmid>pMYSH6000</plasmid>
    </source>
</reference>
<reference key="5">
    <citation type="journal article" date="2011" name="Proc. Natl. Acad. Sci. U.S.A.">
        <title>Enteric virulence associated protein VapC inhibits translation by cleavage of initiator tRNA.</title>
        <authorList>
            <person name="Winther K.S."/>
            <person name="Gerdes K."/>
        </authorList>
    </citation>
    <scope>FUNCTION AS A TOXIN</scope>
    <scope>FUNCTION AS A TRNA ENDONUCLEASE</scope>
    <scope>SUBSTRATE SPECIFICITY</scope>
    <scope>ACTIVITY REGULATION</scope>
    <scope>SUBUNIT</scope>
    <scope>INDUCTION</scope>
    <source>
        <strain>YSH6000 / Serotype 2a</strain>
        <plasmid>pMYSH6000</plasmid>
    </source>
</reference>
<reference key="6">
    <citation type="journal article" date="2011" name="J. Mol. Biol.">
        <title>Crystal structure of the VapBC toxin-antitoxin complex from Shigella flexneri reveals a hetero-octameric DNA-binding assembly.</title>
        <authorList>
            <person name="Dienemann C."/>
            <person name="Boggild A."/>
            <person name="Winther K.S."/>
            <person name="Gerdes K."/>
            <person name="Brodersen D.E."/>
        </authorList>
    </citation>
    <scope>X-RAY CRYSTALLOGRAPHY (2.7 ANGSTROMS)</scope>
    <scope>INTERACTION WITH VAPB</scope>
    <scope>SUBUNIT</scope>
    <source>
        <strain>YSH6000 / Serotype 2a</strain>
        <plasmid>pMYSH6000</plasmid>
    </source>
</reference>
<comment type="function">
    <text>Toxic component of a type II toxin-antitoxin (TA) system. A tRNA-(fMet) endonuclease, it cleaves both charged and uncharged tRNA-(fMet) between positions 38 and 39 at the anticodon stem-loop boundary. Does not cleave tRNA(Met), tRNA(Arg2), tRNA(His), tRNA(Leu), tRNA(Phe) tRNA(Thr1), tRNA(Tyr) or tRNA(Val). Overexpression in E.coli inhibits translation, leads to loss of cell growth and degradation of tRNA(fMet); these effects are neutralized by expression of cognate antitoxin VapB. The VapB/VapC complex probably regulates transcription of its own promoter.</text>
</comment>
<comment type="function">
    <text>Ectopic overexpression in E.coli induces the YoeB toxin, but this is not the cause of VapC toxicity.</text>
</comment>
<comment type="cofactor">
    <cofactor evidence="4">
        <name>Mg(2+)</name>
        <dbReference type="ChEBI" id="CHEBI:18420"/>
    </cofactor>
</comment>
<comment type="activity regulation">
    <text evidence="2">Inhibited by EDTA.</text>
</comment>
<comment type="subunit">
    <text evidence="2 3">Forms a hetero-octamer (4 VapB and 4 VapC) complex with antitoxin VapB. The complex binds 2 different sites in the vapBC promoter, probably via VapB dimerization.</text>
</comment>
<comment type="induction">
    <text evidence="2">Degradation of tRNA(fMet) is induced by chloramphenicol treatment, suggesting the antitoxin is unstable.</text>
</comment>
<comment type="similarity">
    <text evidence="4">Belongs to the PINc/VapC protein family.</text>
</comment>
<dbReference type="EC" id="3.1.-.-"/>
<dbReference type="EMBL" id="U82621">
    <property type="protein sequence ID" value="AAB58157.1"/>
    <property type="molecule type" value="Genomic_DNA"/>
</dbReference>
<dbReference type="EMBL" id="AL391753">
    <property type="protein sequence ID" value="CAC05862.1"/>
    <property type="molecule type" value="Genomic_DNA"/>
</dbReference>
<dbReference type="EMBL" id="AF386526">
    <property type="protein sequence ID" value="AAL72335.1"/>
    <property type="molecule type" value="Genomic_DNA"/>
</dbReference>
<dbReference type="RefSeq" id="NP_085412.1">
    <property type="nucleotide sequence ID" value="NC_002698.1"/>
</dbReference>
<dbReference type="RefSeq" id="NP_858378.1">
    <property type="nucleotide sequence ID" value="NC_004851.1"/>
</dbReference>
<dbReference type="RefSeq" id="WP_000911311.1">
    <property type="nucleotide sequence ID" value="NZ_WPGW01000138.1"/>
</dbReference>
<dbReference type="RefSeq" id="YP_009062544.1">
    <property type="nucleotide sequence ID" value="NC_024996.1"/>
</dbReference>
<dbReference type="PDB" id="3TND">
    <property type="method" value="X-ray"/>
    <property type="resolution" value="2.70 A"/>
    <property type="chains" value="A/C/E/G=1-132"/>
</dbReference>
<dbReference type="PDB" id="5ECD">
    <property type="method" value="X-ray"/>
    <property type="resolution" value="1.75 A"/>
    <property type="chains" value="A/B=2-132"/>
</dbReference>
<dbReference type="PDB" id="5ECW">
    <property type="method" value="X-ray"/>
    <property type="resolution" value="1.94 A"/>
    <property type="chains" value="A/B=2-132"/>
</dbReference>
<dbReference type="PDB" id="5ECY">
    <property type="method" value="X-ray"/>
    <property type="resolution" value="2.00 A"/>
    <property type="chains" value="A/B/C/D/E/F/G/H=2-132"/>
</dbReference>
<dbReference type="PDB" id="5ED0">
    <property type="method" value="X-ray"/>
    <property type="resolution" value="2.10 A"/>
    <property type="chains" value="A/B/C/D/E/F/G/H/I/J/K/L=2-132"/>
</dbReference>
<dbReference type="PDBsum" id="3TND"/>
<dbReference type="PDBsum" id="5ECD"/>
<dbReference type="PDBsum" id="5ECW"/>
<dbReference type="PDBsum" id="5ECY"/>
<dbReference type="PDBsum" id="5ED0"/>
<dbReference type="SMR" id="O06662"/>
<dbReference type="PaxDb" id="198214-CP0245"/>
<dbReference type="GeneID" id="1238038"/>
<dbReference type="KEGG" id="sfl:CP0245"/>
<dbReference type="PATRIC" id="fig|198214.7.peg.5506"/>
<dbReference type="HOGENOM" id="CLU_118482_5_3_6"/>
<dbReference type="EvolutionaryTrace" id="O06662"/>
<dbReference type="Proteomes" id="UP000001006">
    <property type="component" value="Plasmid pCP301"/>
</dbReference>
<dbReference type="GO" id="GO:0004519">
    <property type="term" value="F:endonuclease activity"/>
    <property type="evidence" value="ECO:0007669"/>
    <property type="project" value="UniProtKB-KW"/>
</dbReference>
<dbReference type="GO" id="GO:0000287">
    <property type="term" value="F:magnesium ion binding"/>
    <property type="evidence" value="ECO:0007669"/>
    <property type="project" value="UniProtKB-UniRule"/>
</dbReference>
<dbReference type="GO" id="GO:0004540">
    <property type="term" value="F:RNA nuclease activity"/>
    <property type="evidence" value="ECO:0007669"/>
    <property type="project" value="InterPro"/>
</dbReference>
<dbReference type="CDD" id="cd09881">
    <property type="entry name" value="PIN_VapC4-5_FitB-like"/>
    <property type="match status" value="1"/>
</dbReference>
<dbReference type="Gene3D" id="3.40.50.1010">
    <property type="entry name" value="5'-nuclease"/>
    <property type="match status" value="1"/>
</dbReference>
<dbReference type="HAMAP" id="MF_00265">
    <property type="entry name" value="VapC_Nob1"/>
    <property type="match status" value="1"/>
</dbReference>
<dbReference type="InterPro" id="IPR029060">
    <property type="entry name" value="PIN-like_dom_sf"/>
</dbReference>
<dbReference type="InterPro" id="IPR002716">
    <property type="entry name" value="PIN_dom"/>
</dbReference>
<dbReference type="InterPro" id="IPR050556">
    <property type="entry name" value="Type_II_TA_system_RNase"/>
</dbReference>
<dbReference type="InterPro" id="IPR022907">
    <property type="entry name" value="VapC_family"/>
</dbReference>
<dbReference type="NCBIfam" id="NF010285">
    <property type="entry name" value="PRK13725.1"/>
    <property type="match status" value="1"/>
</dbReference>
<dbReference type="PANTHER" id="PTHR33653">
    <property type="entry name" value="RIBONUCLEASE VAPC2"/>
    <property type="match status" value="1"/>
</dbReference>
<dbReference type="PANTHER" id="PTHR33653:SF1">
    <property type="entry name" value="RIBONUCLEASE VAPC2"/>
    <property type="match status" value="1"/>
</dbReference>
<dbReference type="Pfam" id="PF01850">
    <property type="entry name" value="PIN"/>
    <property type="match status" value="1"/>
</dbReference>
<dbReference type="SUPFAM" id="SSF88723">
    <property type="entry name" value="PIN domain-like"/>
    <property type="match status" value="1"/>
</dbReference>
<proteinExistence type="evidence at protein level"/>